<gene>
    <name evidence="1" type="primary">tdh</name>
    <name type="ordered locus">Bmul_5320</name>
    <name type="ordered locus">BMULJ_03201</name>
</gene>
<keyword id="KW-0963">Cytoplasm</keyword>
<keyword id="KW-0479">Metal-binding</keyword>
<keyword id="KW-0520">NAD</keyword>
<keyword id="KW-0560">Oxidoreductase</keyword>
<keyword id="KW-1185">Reference proteome</keyword>
<keyword id="KW-0862">Zinc</keyword>
<dbReference type="EC" id="1.1.1.103" evidence="1"/>
<dbReference type="EMBL" id="CP000869">
    <property type="protein sequence ID" value="ABX18990.1"/>
    <property type="molecule type" value="Genomic_DNA"/>
</dbReference>
<dbReference type="EMBL" id="AP009386">
    <property type="protein sequence ID" value="BAG45075.1"/>
    <property type="molecule type" value="Genomic_DNA"/>
</dbReference>
<dbReference type="RefSeq" id="WP_006416117.1">
    <property type="nucleotide sequence ID" value="NC_010086.1"/>
</dbReference>
<dbReference type="SMR" id="A9AR24"/>
<dbReference type="STRING" id="395019.BMULJ_03201"/>
<dbReference type="GeneID" id="89567861"/>
<dbReference type="KEGG" id="bmj:BMULJ_03201"/>
<dbReference type="KEGG" id="bmu:Bmul_5320"/>
<dbReference type="eggNOG" id="COG1063">
    <property type="taxonomic scope" value="Bacteria"/>
</dbReference>
<dbReference type="HOGENOM" id="CLU_026673_11_0_4"/>
<dbReference type="UniPathway" id="UPA00046">
    <property type="reaction ID" value="UER00505"/>
</dbReference>
<dbReference type="Proteomes" id="UP000008815">
    <property type="component" value="Chromosome 2"/>
</dbReference>
<dbReference type="GO" id="GO:0005737">
    <property type="term" value="C:cytoplasm"/>
    <property type="evidence" value="ECO:0007669"/>
    <property type="project" value="UniProtKB-SubCell"/>
</dbReference>
<dbReference type="GO" id="GO:0008743">
    <property type="term" value="F:L-threonine 3-dehydrogenase activity"/>
    <property type="evidence" value="ECO:0007669"/>
    <property type="project" value="UniProtKB-UniRule"/>
</dbReference>
<dbReference type="GO" id="GO:0008270">
    <property type="term" value="F:zinc ion binding"/>
    <property type="evidence" value="ECO:0007669"/>
    <property type="project" value="UniProtKB-UniRule"/>
</dbReference>
<dbReference type="GO" id="GO:0019518">
    <property type="term" value="P:L-threonine catabolic process to glycine"/>
    <property type="evidence" value="ECO:0007669"/>
    <property type="project" value="UniProtKB-UniPathway"/>
</dbReference>
<dbReference type="Gene3D" id="3.90.180.10">
    <property type="entry name" value="Medium-chain alcohol dehydrogenases, catalytic domain"/>
    <property type="match status" value="1"/>
</dbReference>
<dbReference type="Gene3D" id="3.40.50.720">
    <property type="entry name" value="NAD(P)-binding Rossmann-like Domain"/>
    <property type="match status" value="1"/>
</dbReference>
<dbReference type="HAMAP" id="MF_00627">
    <property type="entry name" value="Thr_dehydrog"/>
    <property type="match status" value="1"/>
</dbReference>
<dbReference type="InterPro" id="IPR013149">
    <property type="entry name" value="ADH-like_C"/>
</dbReference>
<dbReference type="InterPro" id="IPR013154">
    <property type="entry name" value="ADH-like_N"/>
</dbReference>
<dbReference type="InterPro" id="IPR002328">
    <property type="entry name" value="ADH_Zn_CS"/>
</dbReference>
<dbReference type="InterPro" id="IPR011032">
    <property type="entry name" value="GroES-like_sf"/>
</dbReference>
<dbReference type="InterPro" id="IPR004627">
    <property type="entry name" value="L-Threonine_3-DHase"/>
</dbReference>
<dbReference type="InterPro" id="IPR036291">
    <property type="entry name" value="NAD(P)-bd_dom_sf"/>
</dbReference>
<dbReference type="InterPro" id="IPR020843">
    <property type="entry name" value="PKS_ER"/>
</dbReference>
<dbReference type="InterPro" id="IPR050129">
    <property type="entry name" value="Zn_alcohol_dh"/>
</dbReference>
<dbReference type="NCBIfam" id="NF003808">
    <property type="entry name" value="PRK05396.1"/>
    <property type="match status" value="1"/>
</dbReference>
<dbReference type="NCBIfam" id="TIGR00692">
    <property type="entry name" value="tdh"/>
    <property type="match status" value="1"/>
</dbReference>
<dbReference type="PANTHER" id="PTHR43401">
    <property type="entry name" value="L-THREONINE 3-DEHYDROGENASE"/>
    <property type="match status" value="1"/>
</dbReference>
<dbReference type="PANTHER" id="PTHR43401:SF2">
    <property type="entry name" value="L-THREONINE 3-DEHYDROGENASE"/>
    <property type="match status" value="1"/>
</dbReference>
<dbReference type="Pfam" id="PF08240">
    <property type="entry name" value="ADH_N"/>
    <property type="match status" value="1"/>
</dbReference>
<dbReference type="Pfam" id="PF00107">
    <property type="entry name" value="ADH_zinc_N"/>
    <property type="match status" value="1"/>
</dbReference>
<dbReference type="SMART" id="SM00829">
    <property type="entry name" value="PKS_ER"/>
    <property type="match status" value="1"/>
</dbReference>
<dbReference type="SUPFAM" id="SSF50129">
    <property type="entry name" value="GroES-like"/>
    <property type="match status" value="1"/>
</dbReference>
<dbReference type="SUPFAM" id="SSF51735">
    <property type="entry name" value="NAD(P)-binding Rossmann-fold domains"/>
    <property type="match status" value="1"/>
</dbReference>
<dbReference type="PROSITE" id="PS00059">
    <property type="entry name" value="ADH_ZINC"/>
    <property type="match status" value="1"/>
</dbReference>
<organism>
    <name type="scientific">Burkholderia multivorans (strain ATCC 17616 / 249)</name>
    <dbReference type="NCBI Taxonomy" id="395019"/>
    <lineage>
        <taxon>Bacteria</taxon>
        <taxon>Pseudomonadati</taxon>
        <taxon>Pseudomonadota</taxon>
        <taxon>Betaproteobacteria</taxon>
        <taxon>Burkholderiales</taxon>
        <taxon>Burkholderiaceae</taxon>
        <taxon>Burkholderia</taxon>
        <taxon>Burkholderia cepacia complex</taxon>
    </lineage>
</organism>
<feature type="chain" id="PRO_1000130540" description="L-threonine 3-dehydrogenase">
    <location>
        <begin position="1"/>
        <end position="342"/>
    </location>
</feature>
<feature type="active site" description="Charge relay system" evidence="1">
    <location>
        <position position="40"/>
    </location>
</feature>
<feature type="active site" description="Charge relay system" evidence="1">
    <location>
        <position position="43"/>
    </location>
</feature>
<feature type="binding site" evidence="1">
    <location>
        <position position="38"/>
    </location>
    <ligand>
        <name>Zn(2+)</name>
        <dbReference type="ChEBI" id="CHEBI:29105"/>
        <label>1</label>
        <note>catalytic</note>
    </ligand>
</feature>
<feature type="binding site" evidence="1">
    <location>
        <position position="63"/>
    </location>
    <ligand>
        <name>Zn(2+)</name>
        <dbReference type="ChEBI" id="CHEBI:29105"/>
        <label>1</label>
        <note>catalytic</note>
    </ligand>
</feature>
<feature type="binding site" evidence="1">
    <location>
        <position position="64"/>
    </location>
    <ligand>
        <name>Zn(2+)</name>
        <dbReference type="ChEBI" id="CHEBI:29105"/>
        <label>1</label>
        <note>catalytic</note>
    </ligand>
</feature>
<feature type="binding site" evidence="1">
    <location>
        <position position="93"/>
    </location>
    <ligand>
        <name>Zn(2+)</name>
        <dbReference type="ChEBI" id="CHEBI:29105"/>
        <label>2</label>
    </ligand>
</feature>
<feature type="binding site" evidence="1">
    <location>
        <position position="96"/>
    </location>
    <ligand>
        <name>Zn(2+)</name>
        <dbReference type="ChEBI" id="CHEBI:29105"/>
        <label>2</label>
    </ligand>
</feature>
<feature type="binding site" evidence="1">
    <location>
        <position position="99"/>
    </location>
    <ligand>
        <name>Zn(2+)</name>
        <dbReference type="ChEBI" id="CHEBI:29105"/>
        <label>2</label>
    </ligand>
</feature>
<feature type="binding site" evidence="1">
    <location>
        <position position="107"/>
    </location>
    <ligand>
        <name>Zn(2+)</name>
        <dbReference type="ChEBI" id="CHEBI:29105"/>
        <label>2</label>
    </ligand>
</feature>
<feature type="binding site" evidence="1">
    <location>
        <position position="175"/>
    </location>
    <ligand>
        <name>NAD(+)</name>
        <dbReference type="ChEBI" id="CHEBI:57540"/>
    </ligand>
</feature>
<feature type="binding site" evidence="1">
    <location>
        <position position="195"/>
    </location>
    <ligand>
        <name>NAD(+)</name>
        <dbReference type="ChEBI" id="CHEBI:57540"/>
    </ligand>
</feature>
<feature type="binding site" evidence="1">
    <location>
        <position position="200"/>
    </location>
    <ligand>
        <name>NAD(+)</name>
        <dbReference type="ChEBI" id="CHEBI:57540"/>
    </ligand>
</feature>
<feature type="binding site" evidence="1">
    <location>
        <begin position="262"/>
        <end position="264"/>
    </location>
    <ligand>
        <name>NAD(+)</name>
        <dbReference type="ChEBI" id="CHEBI:57540"/>
    </ligand>
</feature>
<feature type="binding site" evidence="1">
    <location>
        <begin position="286"/>
        <end position="287"/>
    </location>
    <ligand>
        <name>NAD(+)</name>
        <dbReference type="ChEBI" id="CHEBI:57540"/>
    </ligand>
</feature>
<feature type="site" description="Important for catalytic activity for the proton relay mechanism but does not participate directly in the coordination of zinc atom" evidence="1">
    <location>
        <position position="148"/>
    </location>
</feature>
<protein>
    <recommendedName>
        <fullName evidence="1">L-threonine 3-dehydrogenase</fullName>
        <shortName evidence="1">TDH</shortName>
        <ecNumber evidence="1">1.1.1.103</ecNumber>
    </recommendedName>
</protein>
<proteinExistence type="inferred from homology"/>
<reference key="1">
    <citation type="submission" date="2007-10" db="EMBL/GenBank/DDBJ databases">
        <title>Complete sequence of chromosome 2 of Burkholderia multivorans ATCC 17616.</title>
        <authorList>
            <person name="Copeland A."/>
            <person name="Lucas S."/>
            <person name="Lapidus A."/>
            <person name="Barry K."/>
            <person name="Glavina del Rio T."/>
            <person name="Dalin E."/>
            <person name="Tice H."/>
            <person name="Pitluck S."/>
            <person name="Chain P."/>
            <person name="Malfatti S."/>
            <person name="Shin M."/>
            <person name="Vergez L."/>
            <person name="Schmutz J."/>
            <person name="Larimer F."/>
            <person name="Land M."/>
            <person name="Hauser L."/>
            <person name="Kyrpides N."/>
            <person name="Kim E."/>
            <person name="Tiedje J."/>
            <person name="Richardson P."/>
        </authorList>
    </citation>
    <scope>NUCLEOTIDE SEQUENCE [LARGE SCALE GENOMIC DNA]</scope>
    <source>
        <strain>ATCC 17616 / 249</strain>
    </source>
</reference>
<reference key="2">
    <citation type="submission" date="2007-04" db="EMBL/GenBank/DDBJ databases">
        <title>Complete genome sequence of Burkholderia multivorans ATCC 17616.</title>
        <authorList>
            <person name="Ohtsubo Y."/>
            <person name="Yamashita A."/>
            <person name="Kurokawa K."/>
            <person name="Takami H."/>
            <person name="Yuhara S."/>
            <person name="Nishiyama E."/>
            <person name="Endo R."/>
            <person name="Miyazaki R."/>
            <person name="Ono A."/>
            <person name="Yano K."/>
            <person name="Ito M."/>
            <person name="Sota M."/>
            <person name="Yuji N."/>
            <person name="Hattori M."/>
            <person name="Tsuda M."/>
        </authorList>
    </citation>
    <scope>NUCLEOTIDE SEQUENCE [LARGE SCALE GENOMIC DNA]</scope>
    <source>
        <strain>ATCC 17616 / 249</strain>
    </source>
</reference>
<name>TDH_BURM1</name>
<accession>A9AR24</accession>
<comment type="function">
    <text evidence="1">Catalyzes the NAD(+)-dependent oxidation of L-threonine to 2-amino-3-ketobutyrate.</text>
</comment>
<comment type="catalytic activity">
    <reaction evidence="1">
        <text>L-threonine + NAD(+) = (2S)-2-amino-3-oxobutanoate + NADH + H(+)</text>
        <dbReference type="Rhea" id="RHEA:13161"/>
        <dbReference type="ChEBI" id="CHEBI:15378"/>
        <dbReference type="ChEBI" id="CHEBI:57540"/>
        <dbReference type="ChEBI" id="CHEBI:57926"/>
        <dbReference type="ChEBI" id="CHEBI:57945"/>
        <dbReference type="ChEBI" id="CHEBI:78948"/>
        <dbReference type="EC" id="1.1.1.103"/>
    </reaction>
</comment>
<comment type="cofactor">
    <cofactor evidence="1">
        <name>Zn(2+)</name>
        <dbReference type="ChEBI" id="CHEBI:29105"/>
    </cofactor>
    <text evidence="1">Binds 2 Zn(2+) ions per subunit.</text>
</comment>
<comment type="pathway">
    <text evidence="1">Amino-acid degradation; L-threonine degradation via oxydo-reductase pathway; glycine from L-threonine: step 1/2.</text>
</comment>
<comment type="subunit">
    <text evidence="1">Homotetramer.</text>
</comment>
<comment type="subcellular location">
    <subcellularLocation>
        <location evidence="1">Cytoplasm</location>
    </subcellularLocation>
</comment>
<comment type="similarity">
    <text evidence="1">Belongs to the zinc-containing alcohol dehydrogenase family.</text>
</comment>
<evidence type="ECO:0000255" key="1">
    <source>
        <dbReference type="HAMAP-Rule" id="MF_00627"/>
    </source>
</evidence>
<sequence>MKALAKLERAPGLTLTRVKRPEVGHNDVLIKIRRTAICGTDIHIWKWDDWAQKTIPVPMHVGHEYVGEIVEMGQEVRGFAIGDRVSGEGHITCGFCRNCRAGRRHLCRNTVGVGVNREGAFAEYLAIPAFNAFKIPPEISDDLASIFDPFGNATHTALSFNLVGEDVLITGAGPIGIMAVAIAKHVGARNVVITDINDYRLELARKMGATRAVNVARESLRDVMADLRMTEGFDVGLEMSGVPSAFTSLLEAMNHGGKVALLGIPPAQTAIDWNQVIFKGLEIKGIYGREMFETWYKMVAMLQSGLDLSPIITHRFAADDYEKGFAAMLSGESGKVILDWTV</sequence>